<comment type="function">
    <text evidence="1">One of the primary rRNA binding proteins, it binds specifically to the 5'-end of 16S ribosomal RNA.</text>
</comment>
<comment type="subunit">
    <text evidence="1">Part of the 30S ribosomal subunit.</text>
</comment>
<comment type="similarity">
    <text evidence="1">Belongs to the universal ribosomal protein uS17 family.</text>
</comment>
<proteinExistence type="inferred from homology"/>
<dbReference type="EMBL" id="CP001336">
    <property type="protein sequence ID" value="ACL18498.1"/>
    <property type="molecule type" value="Genomic_DNA"/>
</dbReference>
<dbReference type="RefSeq" id="WP_005810146.1">
    <property type="nucleotide sequence ID" value="NC_011830.1"/>
</dbReference>
<dbReference type="SMR" id="B8G1X5"/>
<dbReference type="KEGG" id="dhd:Dhaf_0431"/>
<dbReference type="HOGENOM" id="CLU_073626_1_0_9"/>
<dbReference type="Proteomes" id="UP000007726">
    <property type="component" value="Chromosome"/>
</dbReference>
<dbReference type="GO" id="GO:0022627">
    <property type="term" value="C:cytosolic small ribosomal subunit"/>
    <property type="evidence" value="ECO:0007669"/>
    <property type="project" value="TreeGrafter"/>
</dbReference>
<dbReference type="GO" id="GO:0019843">
    <property type="term" value="F:rRNA binding"/>
    <property type="evidence" value="ECO:0007669"/>
    <property type="project" value="UniProtKB-UniRule"/>
</dbReference>
<dbReference type="GO" id="GO:0003735">
    <property type="term" value="F:structural constituent of ribosome"/>
    <property type="evidence" value="ECO:0007669"/>
    <property type="project" value="InterPro"/>
</dbReference>
<dbReference type="GO" id="GO:0006412">
    <property type="term" value="P:translation"/>
    <property type="evidence" value="ECO:0007669"/>
    <property type="project" value="UniProtKB-UniRule"/>
</dbReference>
<dbReference type="CDD" id="cd00364">
    <property type="entry name" value="Ribosomal_uS17"/>
    <property type="match status" value="1"/>
</dbReference>
<dbReference type="FunFam" id="2.40.50.140:FF:000123">
    <property type="entry name" value="30S ribosomal protein S17"/>
    <property type="match status" value="1"/>
</dbReference>
<dbReference type="Gene3D" id="2.40.50.140">
    <property type="entry name" value="Nucleic acid-binding proteins"/>
    <property type="match status" value="1"/>
</dbReference>
<dbReference type="HAMAP" id="MF_01345_B">
    <property type="entry name" value="Ribosomal_uS17_B"/>
    <property type="match status" value="1"/>
</dbReference>
<dbReference type="InterPro" id="IPR012340">
    <property type="entry name" value="NA-bd_OB-fold"/>
</dbReference>
<dbReference type="InterPro" id="IPR000266">
    <property type="entry name" value="Ribosomal_uS17"/>
</dbReference>
<dbReference type="InterPro" id="IPR019984">
    <property type="entry name" value="Ribosomal_uS17_bact/chlr"/>
</dbReference>
<dbReference type="InterPro" id="IPR019979">
    <property type="entry name" value="Ribosomal_uS17_CS"/>
</dbReference>
<dbReference type="NCBIfam" id="NF004123">
    <property type="entry name" value="PRK05610.1"/>
    <property type="match status" value="1"/>
</dbReference>
<dbReference type="NCBIfam" id="TIGR03635">
    <property type="entry name" value="uS17_bact"/>
    <property type="match status" value="1"/>
</dbReference>
<dbReference type="PANTHER" id="PTHR10744">
    <property type="entry name" value="40S RIBOSOMAL PROTEIN S11 FAMILY MEMBER"/>
    <property type="match status" value="1"/>
</dbReference>
<dbReference type="PANTHER" id="PTHR10744:SF1">
    <property type="entry name" value="SMALL RIBOSOMAL SUBUNIT PROTEIN US17M"/>
    <property type="match status" value="1"/>
</dbReference>
<dbReference type="Pfam" id="PF00366">
    <property type="entry name" value="Ribosomal_S17"/>
    <property type="match status" value="1"/>
</dbReference>
<dbReference type="PRINTS" id="PR00973">
    <property type="entry name" value="RIBOSOMALS17"/>
</dbReference>
<dbReference type="SUPFAM" id="SSF50249">
    <property type="entry name" value="Nucleic acid-binding proteins"/>
    <property type="match status" value="1"/>
</dbReference>
<dbReference type="PROSITE" id="PS00056">
    <property type="entry name" value="RIBOSOMAL_S17"/>
    <property type="match status" value="1"/>
</dbReference>
<organism>
    <name type="scientific">Desulfitobacterium hafniense (strain DSM 10664 / DCB-2)</name>
    <dbReference type="NCBI Taxonomy" id="272564"/>
    <lineage>
        <taxon>Bacteria</taxon>
        <taxon>Bacillati</taxon>
        <taxon>Bacillota</taxon>
        <taxon>Clostridia</taxon>
        <taxon>Eubacteriales</taxon>
        <taxon>Desulfitobacteriaceae</taxon>
        <taxon>Desulfitobacterium</taxon>
    </lineage>
</organism>
<evidence type="ECO:0000255" key="1">
    <source>
        <dbReference type="HAMAP-Rule" id="MF_01345"/>
    </source>
</evidence>
<evidence type="ECO:0000305" key="2"/>
<sequence>MERTQRKVRVGKVVSDKMEKTIVVAVEMKVRHPLYHRTITQTKKFKAHDENNEAKIGDSVVIMETRPISKDKRWRLVEITERAVVL</sequence>
<name>RS17_DESHD</name>
<keyword id="KW-0687">Ribonucleoprotein</keyword>
<keyword id="KW-0689">Ribosomal protein</keyword>
<keyword id="KW-0694">RNA-binding</keyword>
<keyword id="KW-0699">rRNA-binding</keyword>
<reference key="1">
    <citation type="journal article" date="2012" name="BMC Microbiol.">
        <title>Genome sequence of Desulfitobacterium hafniense DCB-2, a Gram-positive anaerobe capable of dehalogenation and metal reduction.</title>
        <authorList>
            <person name="Kim S.H."/>
            <person name="Harzman C."/>
            <person name="Davis J.K."/>
            <person name="Hutcheson R."/>
            <person name="Broderick J.B."/>
            <person name="Marsh T.L."/>
            <person name="Tiedje J.M."/>
        </authorList>
    </citation>
    <scope>NUCLEOTIDE SEQUENCE [LARGE SCALE GENOMIC DNA]</scope>
    <source>
        <strain>DSM 10664 / DCB-2</strain>
    </source>
</reference>
<accession>B8G1X5</accession>
<feature type="chain" id="PRO_1000166476" description="Small ribosomal subunit protein uS17">
    <location>
        <begin position="1"/>
        <end position="86"/>
    </location>
</feature>
<gene>
    <name evidence="1" type="primary">rpsQ</name>
    <name type="ordered locus">Dhaf_0431</name>
</gene>
<protein>
    <recommendedName>
        <fullName evidence="1">Small ribosomal subunit protein uS17</fullName>
    </recommendedName>
    <alternativeName>
        <fullName evidence="2">30S ribosomal protein S17</fullName>
    </alternativeName>
</protein>